<comment type="function">
    <text evidence="1">Part of a cell division machinery. May fulfill a coordination function between the Cdv proteins during cell division.</text>
</comment>
<comment type="disruption phenotype">
    <text evidence="1">Deletion mutant forms extremely small colonies on selective plates. Forms enlarged cells, with a highly elevated content of DNA. Mutant shows aberrant cellular localization of CdvA.</text>
</comment>
<keyword id="KW-0131">Cell cycle</keyword>
<keyword id="KW-0132">Cell division</keyword>
<keyword id="KW-1185">Reference proteome</keyword>
<reference key="1">
    <citation type="journal article" date="2005" name="J. Bacteriol.">
        <title>The genome of Sulfolobus acidocaldarius, a model organism of the Crenarchaeota.</title>
        <authorList>
            <person name="Chen L."/>
            <person name="Bruegger K."/>
            <person name="Skovgaard M."/>
            <person name="Redder P."/>
            <person name="She Q."/>
            <person name="Torarinsson E."/>
            <person name="Greve B."/>
            <person name="Awayez M."/>
            <person name="Zibat A."/>
            <person name="Klenk H.-P."/>
            <person name="Garrett R.A."/>
        </authorList>
    </citation>
    <scope>NUCLEOTIDE SEQUENCE [LARGE SCALE GENOMIC DNA]</scope>
    <source>
        <strain>ATCC 33909 / DSM 639 / JCM 8929 / NBRC 15157 / NCIMB 11770</strain>
    </source>
</reference>
<reference key="2">
    <citation type="journal article" date="2014" name="Extremophiles">
        <title>Deletion of cdvB paralogous genes of Sulfolobus acidocaldarius impairs cell division.</title>
        <authorList>
            <person name="Yang N."/>
            <person name="Driessen A.J."/>
        </authorList>
    </citation>
    <scope>FUNCTION</scope>
    <scope>DISRUPTION PHENOTYPE</scope>
    <source>
        <strain>MR31</strain>
    </source>
</reference>
<organism>
    <name type="scientific">Sulfolobus acidocaldarius (strain ATCC 33909 / DSM 639 / JCM 8929 / NBRC 15157 / NCIMB 11770)</name>
    <dbReference type="NCBI Taxonomy" id="330779"/>
    <lineage>
        <taxon>Archaea</taxon>
        <taxon>Thermoproteota</taxon>
        <taxon>Thermoprotei</taxon>
        <taxon>Sulfolobales</taxon>
        <taxon>Sulfolobaceae</taxon>
        <taxon>Sulfolobus</taxon>
    </lineage>
</organism>
<protein>
    <recommendedName>
        <fullName evidence="3">Cell division protein B3</fullName>
    </recommendedName>
    <alternativeName>
        <fullName evidence="3">ESCRT-III homolog</fullName>
    </alternativeName>
</protein>
<dbReference type="EMBL" id="CP000077">
    <property type="protein sequence ID" value="AAY80914.1"/>
    <property type="molecule type" value="Genomic_DNA"/>
</dbReference>
<dbReference type="RefSeq" id="WP_011278416.1">
    <property type="nucleotide sequence ID" value="NC_007181.1"/>
</dbReference>
<dbReference type="SMR" id="Q4J8G7"/>
<dbReference type="STRING" id="330779.Saci_1601"/>
<dbReference type="TCDB" id="3.A.31.1.3">
    <property type="family name" value="the endosomal sorting complexes required for transport iii (escrt-iii) family"/>
</dbReference>
<dbReference type="GeneID" id="14552094"/>
<dbReference type="GeneID" id="78441944"/>
<dbReference type="KEGG" id="sai:Saci_1601"/>
<dbReference type="PATRIC" id="fig|330779.12.peg.1541"/>
<dbReference type="eggNOG" id="arCOG00454">
    <property type="taxonomic scope" value="Archaea"/>
</dbReference>
<dbReference type="HOGENOM" id="CLU_1575015_0_0_2"/>
<dbReference type="Proteomes" id="UP000001018">
    <property type="component" value="Chromosome"/>
</dbReference>
<dbReference type="GO" id="GO:0051301">
    <property type="term" value="P:cell division"/>
    <property type="evidence" value="ECO:0007669"/>
    <property type="project" value="UniProtKB-KW"/>
</dbReference>
<dbReference type="InterPro" id="IPR053658">
    <property type="entry name" value="Cdv_Coordination_Protein"/>
</dbReference>
<dbReference type="NCBIfam" id="NF041009">
    <property type="entry name" value="cell_div_CdvB3"/>
    <property type="match status" value="1"/>
</dbReference>
<evidence type="ECO:0000269" key="1">
    <source>
    </source>
</evidence>
<evidence type="ECO:0000303" key="2">
    <source>
    </source>
</evidence>
<evidence type="ECO:0000305" key="3"/>
<evidence type="ECO:0000312" key="4">
    <source>
        <dbReference type="EMBL" id="AAY80914.1"/>
    </source>
</evidence>
<gene>
    <name evidence="2" type="primary">cdvB3</name>
    <name evidence="4" type="ordered locus">Saci_1601</name>
</gene>
<feature type="chain" id="PRO_0000438769" description="Cell division protein B3">
    <location>
        <begin position="1"/>
        <end position="169"/>
    </location>
</feature>
<name>CDVB3_SULAC</name>
<sequence>MKKRTIAELLTDIRMAKYKIDMWISKAENRNKALERLSLSNIGRFPLLSKEYIKETELTRKYIVTLVQLKILLEILEIRLETLIILGNVVTYLSPLVEALNELKGQLGASIEFSPIIDEIIETIRTVYIAPNTVQQSPQINVKEEARQLLKEAEDVAKKELKENYKIEI</sequence>
<accession>Q4J8G7</accession>
<proteinExistence type="predicted"/>